<sequence length="79" mass="8543">MSEIGERVKKIVVEHLGVEPEKVVDGASFIDDLGADSLDTVELVMAFEEEFGCEIPDDAAETILTVGDATKFLEKNAKS</sequence>
<dbReference type="EMBL" id="CP000250">
    <property type="protein sequence ID" value="ABD07173.1"/>
    <property type="molecule type" value="Genomic_DNA"/>
</dbReference>
<dbReference type="RefSeq" id="WP_011441358.1">
    <property type="nucleotide sequence ID" value="NC_007778.1"/>
</dbReference>
<dbReference type="SMR" id="Q2IX87"/>
<dbReference type="STRING" id="316058.RPB_2468"/>
<dbReference type="KEGG" id="rpb:RPB_2468"/>
<dbReference type="eggNOG" id="COG0236">
    <property type="taxonomic scope" value="Bacteria"/>
</dbReference>
<dbReference type="HOGENOM" id="CLU_108696_5_1_5"/>
<dbReference type="OrthoDB" id="9804551at2"/>
<dbReference type="UniPathway" id="UPA00094"/>
<dbReference type="Proteomes" id="UP000008809">
    <property type="component" value="Chromosome"/>
</dbReference>
<dbReference type="GO" id="GO:0005829">
    <property type="term" value="C:cytosol"/>
    <property type="evidence" value="ECO:0007669"/>
    <property type="project" value="TreeGrafter"/>
</dbReference>
<dbReference type="GO" id="GO:0016020">
    <property type="term" value="C:membrane"/>
    <property type="evidence" value="ECO:0007669"/>
    <property type="project" value="GOC"/>
</dbReference>
<dbReference type="GO" id="GO:0000035">
    <property type="term" value="F:acyl binding"/>
    <property type="evidence" value="ECO:0007669"/>
    <property type="project" value="TreeGrafter"/>
</dbReference>
<dbReference type="GO" id="GO:0000036">
    <property type="term" value="F:acyl carrier activity"/>
    <property type="evidence" value="ECO:0007669"/>
    <property type="project" value="UniProtKB-UniRule"/>
</dbReference>
<dbReference type="GO" id="GO:0031177">
    <property type="term" value="F:phosphopantetheine binding"/>
    <property type="evidence" value="ECO:0007669"/>
    <property type="project" value="InterPro"/>
</dbReference>
<dbReference type="GO" id="GO:0009245">
    <property type="term" value="P:lipid A biosynthetic process"/>
    <property type="evidence" value="ECO:0007669"/>
    <property type="project" value="TreeGrafter"/>
</dbReference>
<dbReference type="FunFam" id="1.10.1200.10:FF:000012">
    <property type="entry name" value="Acyl carrier protein"/>
    <property type="match status" value="1"/>
</dbReference>
<dbReference type="Gene3D" id="1.10.1200.10">
    <property type="entry name" value="ACP-like"/>
    <property type="match status" value="1"/>
</dbReference>
<dbReference type="HAMAP" id="MF_01217">
    <property type="entry name" value="Acyl_carrier"/>
    <property type="match status" value="1"/>
</dbReference>
<dbReference type="InterPro" id="IPR003231">
    <property type="entry name" value="ACP"/>
</dbReference>
<dbReference type="InterPro" id="IPR036736">
    <property type="entry name" value="ACP-like_sf"/>
</dbReference>
<dbReference type="InterPro" id="IPR020806">
    <property type="entry name" value="PKS_PP-bd"/>
</dbReference>
<dbReference type="InterPro" id="IPR009081">
    <property type="entry name" value="PP-bd_ACP"/>
</dbReference>
<dbReference type="InterPro" id="IPR006162">
    <property type="entry name" value="Ppantetheine_attach_site"/>
</dbReference>
<dbReference type="NCBIfam" id="TIGR00517">
    <property type="entry name" value="acyl_carrier"/>
    <property type="match status" value="1"/>
</dbReference>
<dbReference type="NCBIfam" id="NF002148">
    <property type="entry name" value="PRK00982.1-2"/>
    <property type="match status" value="1"/>
</dbReference>
<dbReference type="NCBIfam" id="NF002149">
    <property type="entry name" value="PRK00982.1-3"/>
    <property type="match status" value="1"/>
</dbReference>
<dbReference type="NCBIfam" id="NF002150">
    <property type="entry name" value="PRK00982.1-4"/>
    <property type="match status" value="1"/>
</dbReference>
<dbReference type="NCBIfam" id="NF002151">
    <property type="entry name" value="PRK00982.1-5"/>
    <property type="match status" value="1"/>
</dbReference>
<dbReference type="PANTHER" id="PTHR20863">
    <property type="entry name" value="ACYL CARRIER PROTEIN"/>
    <property type="match status" value="1"/>
</dbReference>
<dbReference type="PANTHER" id="PTHR20863:SF76">
    <property type="entry name" value="CARRIER DOMAIN-CONTAINING PROTEIN"/>
    <property type="match status" value="1"/>
</dbReference>
<dbReference type="Pfam" id="PF00550">
    <property type="entry name" value="PP-binding"/>
    <property type="match status" value="1"/>
</dbReference>
<dbReference type="SMART" id="SM00823">
    <property type="entry name" value="PKS_PP"/>
    <property type="match status" value="1"/>
</dbReference>
<dbReference type="SUPFAM" id="SSF47336">
    <property type="entry name" value="ACP-like"/>
    <property type="match status" value="1"/>
</dbReference>
<dbReference type="PROSITE" id="PS50075">
    <property type="entry name" value="CARRIER"/>
    <property type="match status" value="1"/>
</dbReference>
<dbReference type="PROSITE" id="PS00012">
    <property type="entry name" value="PHOSPHOPANTETHEINE"/>
    <property type="match status" value="1"/>
</dbReference>
<keyword id="KW-0963">Cytoplasm</keyword>
<keyword id="KW-0275">Fatty acid biosynthesis</keyword>
<keyword id="KW-0276">Fatty acid metabolism</keyword>
<keyword id="KW-0444">Lipid biosynthesis</keyword>
<keyword id="KW-0443">Lipid metabolism</keyword>
<keyword id="KW-0596">Phosphopantetheine</keyword>
<keyword id="KW-0597">Phosphoprotein</keyword>
<keyword id="KW-1185">Reference proteome</keyword>
<accession>Q2IX87</accession>
<feature type="chain" id="PRO_1000066672" description="Acyl carrier protein">
    <location>
        <begin position="1"/>
        <end position="79"/>
    </location>
</feature>
<feature type="domain" description="Carrier" evidence="2">
    <location>
        <begin position="2"/>
        <end position="77"/>
    </location>
</feature>
<feature type="modified residue" description="O-(pantetheine 4'-phosphoryl)serine" evidence="2">
    <location>
        <position position="37"/>
    </location>
</feature>
<reference key="1">
    <citation type="submission" date="2006-01" db="EMBL/GenBank/DDBJ databases">
        <title>Complete sequence of Rhodopseudomonas palustris HaA2.</title>
        <authorList>
            <consortium name="US DOE Joint Genome Institute"/>
            <person name="Copeland A."/>
            <person name="Lucas S."/>
            <person name="Lapidus A."/>
            <person name="Barry K."/>
            <person name="Detter J.C."/>
            <person name="Glavina T."/>
            <person name="Hammon N."/>
            <person name="Israni S."/>
            <person name="Pitluck S."/>
            <person name="Chain P."/>
            <person name="Malfatti S."/>
            <person name="Shin M."/>
            <person name="Vergez L."/>
            <person name="Schmutz J."/>
            <person name="Larimer F."/>
            <person name="Land M."/>
            <person name="Hauser L."/>
            <person name="Pelletier D.A."/>
            <person name="Kyrpides N."/>
            <person name="Anderson I."/>
            <person name="Oda Y."/>
            <person name="Harwood C.S."/>
            <person name="Richardson P."/>
        </authorList>
    </citation>
    <scope>NUCLEOTIDE SEQUENCE [LARGE SCALE GENOMIC DNA]</scope>
    <source>
        <strain>HaA2</strain>
    </source>
</reference>
<comment type="function">
    <text evidence="1">Carrier of the growing fatty acid chain in fatty acid biosynthesis.</text>
</comment>
<comment type="pathway">
    <text evidence="1">Lipid metabolism; fatty acid biosynthesis.</text>
</comment>
<comment type="subcellular location">
    <subcellularLocation>
        <location evidence="1">Cytoplasm</location>
    </subcellularLocation>
</comment>
<comment type="PTM">
    <text evidence="1">4'-phosphopantetheine is transferred from CoA to a specific serine of apo-ACP by AcpS. This modification is essential for activity because fatty acids are bound in thioester linkage to the sulfhydryl of the prosthetic group.</text>
</comment>
<comment type="similarity">
    <text evidence="1">Belongs to the acyl carrier protein (ACP) family.</text>
</comment>
<evidence type="ECO:0000255" key="1">
    <source>
        <dbReference type="HAMAP-Rule" id="MF_01217"/>
    </source>
</evidence>
<evidence type="ECO:0000255" key="2">
    <source>
        <dbReference type="PROSITE-ProRule" id="PRU00258"/>
    </source>
</evidence>
<organism>
    <name type="scientific">Rhodopseudomonas palustris (strain HaA2)</name>
    <dbReference type="NCBI Taxonomy" id="316058"/>
    <lineage>
        <taxon>Bacteria</taxon>
        <taxon>Pseudomonadati</taxon>
        <taxon>Pseudomonadota</taxon>
        <taxon>Alphaproteobacteria</taxon>
        <taxon>Hyphomicrobiales</taxon>
        <taxon>Nitrobacteraceae</taxon>
        <taxon>Rhodopseudomonas</taxon>
    </lineage>
</organism>
<name>ACP_RHOP2</name>
<protein>
    <recommendedName>
        <fullName evidence="1">Acyl carrier protein</fullName>
        <shortName evidence="1">ACP</shortName>
    </recommendedName>
</protein>
<proteinExistence type="inferred from homology"/>
<gene>
    <name evidence="1" type="primary">acpP</name>
    <name type="ordered locus">RPB_2468</name>
</gene>